<feature type="chain" id="PRO_0000162514" description="Arsenate reductase">
    <location>
        <begin position="1"/>
        <end position="134"/>
    </location>
</feature>
<feature type="active site" description="Nucleophile" evidence="1">
    <location>
        <position position="11"/>
    </location>
</feature>
<feature type="active site" description="Nucleophile" evidence="1">
    <location>
        <position position="83"/>
    </location>
</feature>
<feature type="active site" description="Nucleophile" evidence="1">
    <location>
        <position position="90"/>
    </location>
</feature>
<feature type="disulfide bond" description="Redox-active; alternate" evidence="1">
    <location>
        <begin position="11"/>
        <end position="83"/>
    </location>
</feature>
<feature type="disulfide bond" description="Redox-active; alternate" evidence="1">
    <location>
        <begin position="83"/>
        <end position="90"/>
    </location>
</feature>
<evidence type="ECO:0000255" key="1">
    <source>
        <dbReference type="HAMAP-Rule" id="MF_01624"/>
    </source>
</evidence>
<dbReference type="EC" id="1.20.4.4" evidence="1"/>
<dbReference type="EMBL" id="AE016877">
    <property type="protein sequence ID" value="AAP10094.1"/>
    <property type="molecule type" value="Genomic_DNA"/>
</dbReference>
<dbReference type="RefSeq" id="NP_832893.1">
    <property type="nucleotide sequence ID" value="NC_004722.1"/>
</dbReference>
<dbReference type="RefSeq" id="WP_000428363.1">
    <property type="nucleotide sequence ID" value="NC_004722.1"/>
</dbReference>
<dbReference type="SMR" id="Q81BK3"/>
<dbReference type="STRING" id="226900.BC_3152"/>
<dbReference type="KEGG" id="bce:BC3152"/>
<dbReference type="PATRIC" id="fig|226900.8.peg.3234"/>
<dbReference type="HOGENOM" id="CLU_071415_3_2_9"/>
<dbReference type="OrthoDB" id="9784339at2"/>
<dbReference type="Proteomes" id="UP000001417">
    <property type="component" value="Chromosome"/>
</dbReference>
<dbReference type="GO" id="GO:0005737">
    <property type="term" value="C:cytoplasm"/>
    <property type="evidence" value="ECO:0007669"/>
    <property type="project" value="UniProtKB-SubCell"/>
</dbReference>
<dbReference type="GO" id="GO:0030612">
    <property type="term" value="F:arsenate reductase (thioredoxin) activity"/>
    <property type="evidence" value="ECO:0007669"/>
    <property type="project" value="UniProtKB-UniRule"/>
</dbReference>
<dbReference type="GO" id="GO:0004725">
    <property type="term" value="F:protein tyrosine phosphatase activity"/>
    <property type="evidence" value="ECO:0007669"/>
    <property type="project" value="InterPro"/>
</dbReference>
<dbReference type="GO" id="GO:0046685">
    <property type="term" value="P:response to arsenic-containing substance"/>
    <property type="evidence" value="ECO:0007669"/>
    <property type="project" value="UniProtKB-KW"/>
</dbReference>
<dbReference type="CDD" id="cd16345">
    <property type="entry name" value="LMWP_ArsC"/>
    <property type="match status" value="1"/>
</dbReference>
<dbReference type="FunFam" id="3.40.50.2300:FF:000237">
    <property type="entry name" value="Arsenate reductase"/>
    <property type="match status" value="1"/>
</dbReference>
<dbReference type="Gene3D" id="3.40.50.2300">
    <property type="match status" value="1"/>
</dbReference>
<dbReference type="HAMAP" id="MF_01624">
    <property type="entry name" value="Arsenate_reduct"/>
    <property type="match status" value="1"/>
</dbReference>
<dbReference type="InterPro" id="IPR014064">
    <property type="entry name" value="Arsenate_reductase_ArsC"/>
</dbReference>
<dbReference type="InterPro" id="IPR023485">
    <property type="entry name" value="Ptyr_pPase"/>
</dbReference>
<dbReference type="InterPro" id="IPR036196">
    <property type="entry name" value="Ptyr_pPase_sf"/>
</dbReference>
<dbReference type="NCBIfam" id="TIGR02691">
    <property type="entry name" value="arsC_pI258_fam"/>
    <property type="match status" value="1"/>
</dbReference>
<dbReference type="NCBIfam" id="NF010053">
    <property type="entry name" value="PRK13530.1"/>
    <property type="match status" value="1"/>
</dbReference>
<dbReference type="PANTHER" id="PTHR43428">
    <property type="entry name" value="ARSENATE REDUCTASE"/>
    <property type="match status" value="1"/>
</dbReference>
<dbReference type="PANTHER" id="PTHR43428:SF1">
    <property type="entry name" value="ARSENATE REDUCTASE"/>
    <property type="match status" value="1"/>
</dbReference>
<dbReference type="Pfam" id="PF01451">
    <property type="entry name" value="LMWPc"/>
    <property type="match status" value="1"/>
</dbReference>
<dbReference type="SMART" id="SM00226">
    <property type="entry name" value="LMWPc"/>
    <property type="match status" value="1"/>
</dbReference>
<dbReference type="SUPFAM" id="SSF52788">
    <property type="entry name" value="Phosphotyrosine protein phosphatases I"/>
    <property type="match status" value="1"/>
</dbReference>
<gene>
    <name evidence="1" type="primary">arsC</name>
    <name type="ordered locus">BC_3152</name>
</gene>
<comment type="function">
    <text evidence="1">Catalyzes the reduction of arsenate [As(V)] to arsenite [As(III)].</text>
</comment>
<comment type="catalytic activity">
    <reaction evidence="1">
        <text>arsenate + [thioredoxin]-dithiol + H(+) = arsenite + [thioredoxin]-disulfide + H2O</text>
        <dbReference type="Rhea" id="RHEA:43848"/>
        <dbReference type="Rhea" id="RHEA-COMP:10698"/>
        <dbReference type="Rhea" id="RHEA-COMP:10700"/>
        <dbReference type="ChEBI" id="CHEBI:15377"/>
        <dbReference type="ChEBI" id="CHEBI:15378"/>
        <dbReference type="ChEBI" id="CHEBI:29242"/>
        <dbReference type="ChEBI" id="CHEBI:29950"/>
        <dbReference type="ChEBI" id="CHEBI:48597"/>
        <dbReference type="ChEBI" id="CHEBI:50058"/>
        <dbReference type="EC" id="1.20.4.4"/>
    </reaction>
</comment>
<comment type="subcellular location">
    <subcellularLocation>
        <location evidence="1">Cytoplasm</location>
    </subcellularLocation>
</comment>
<comment type="similarity">
    <text evidence="1">Belongs to the low molecular weight phosphotyrosine protein phosphatase family. Thioredoxin-coupled ArsC subfamily.</text>
</comment>
<name>ARSC_BACCR</name>
<proteinExistence type="inferred from homology"/>
<keyword id="KW-0059">Arsenical resistance</keyword>
<keyword id="KW-0963">Cytoplasm</keyword>
<keyword id="KW-1015">Disulfide bond</keyword>
<keyword id="KW-0560">Oxidoreductase</keyword>
<keyword id="KW-0676">Redox-active center</keyword>
<keyword id="KW-1185">Reference proteome</keyword>
<accession>Q81BK3</accession>
<organism>
    <name type="scientific">Bacillus cereus (strain ATCC 14579 / DSM 31 / CCUG 7414 / JCM 2152 / NBRC 15305 / NCIMB 9373 / NCTC 2599 / NRRL B-3711)</name>
    <dbReference type="NCBI Taxonomy" id="226900"/>
    <lineage>
        <taxon>Bacteria</taxon>
        <taxon>Bacillati</taxon>
        <taxon>Bacillota</taxon>
        <taxon>Bacilli</taxon>
        <taxon>Bacillales</taxon>
        <taxon>Bacillaceae</taxon>
        <taxon>Bacillus</taxon>
        <taxon>Bacillus cereus group</taxon>
    </lineage>
</organism>
<protein>
    <recommendedName>
        <fullName evidence="1">Arsenate reductase</fullName>
        <ecNumber evidence="1">1.20.4.4</ecNumber>
    </recommendedName>
</protein>
<reference key="1">
    <citation type="journal article" date="2003" name="Nature">
        <title>Genome sequence of Bacillus cereus and comparative analysis with Bacillus anthracis.</title>
        <authorList>
            <person name="Ivanova N."/>
            <person name="Sorokin A."/>
            <person name="Anderson I."/>
            <person name="Galleron N."/>
            <person name="Candelon B."/>
            <person name="Kapatral V."/>
            <person name="Bhattacharyya A."/>
            <person name="Reznik G."/>
            <person name="Mikhailova N."/>
            <person name="Lapidus A."/>
            <person name="Chu L."/>
            <person name="Mazur M."/>
            <person name="Goltsman E."/>
            <person name="Larsen N."/>
            <person name="D'Souza M."/>
            <person name="Walunas T."/>
            <person name="Grechkin Y."/>
            <person name="Pusch G."/>
            <person name="Haselkorn R."/>
            <person name="Fonstein M."/>
            <person name="Ehrlich S.D."/>
            <person name="Overbeek R."/>
            <person name="Kyrpides N.C."/>
        </authorList>
    </citation>
    <scope>NUCLEOTIDE SEQUENCE [LARGE SCALE GENOMIC DNA]</scope>
    <source>
        <strain>ATCC 14579 / DSM 31 / CCUG 7414 / JCM 2152 / NBRC 15305 / NCIMB 9373 / NCTC 2599 / NRRL B-3711</strain>
    </source>
</reference>
<sequence length="134" mass="15020">MENKKTIYFLCTGNSCRSQMAEAWGKQYLGDKWNVYSAGMEAHGVNPNAIKAMNEVNIDITNQTSDIIDANILNSADLVVTLCSHADSVCPSTPPHVNRVHWGFDDPAGKEWSEFQRVRDEIGERIKRFSKTGE</sequence>